<reference key="1">
    <citation type="submission" date="1996-09" db="EMBL/GenBank/DDBJ databases">
        <title>A transcript encoding the large subunit acidic ribosomal protein P0 is stored in unfertilized egg cells of maize.</title>
        <authorList>
            <person name="Cordts S."/>
            <person name="Loerz H."/>
            <person name="Dresselhaus T."/>
        </authorList>
    </citation>
    <scope>NUCLEOTIDE SEQUENCE [MRNA]</scope>
    <source>
        <strain>cv. A188</strain>
    </source>
</reference>
<reference key="2">
    <citation type="journal article" date="1997" name="Plant Physiol.">
        <title>Acidic phosphoprotein complex of the 60S ribosomal subunit of maize seedling roots. Components and changes in response to flooding.</title>
        <authorList>
            <person name="Bailey-Serres J."/>
            <person name="Vangala S."/>
            <person name="Szick K."/>
            <person name="Lee C.H."/>
        </authorList>
    </citation>
    <scope>PROTEIN SEQUENCE OF 2-12</scope>
    <scope>PHOSPHORYLATION</scope>
    <source>
        <strain>cv. B73</strain>
        <tissue>Ear of corn</tissue>
    </source>
</reference>
<organism>
    <name type="scientific">Zea mays</name>
    <name type="common">Maize</name>
    <dbReference type="NCBI Taxonomy" id="4577"/>
    <lineage>
        <taxon>Eukaryota</taxon>
        <taxon>Viridiplantae</taxon>
        <taxon>Streptophyta</taxon>
        <taxon>Embryophyta</taxon>
        <taxon>Tracheophyta</taxon>
        <taxon>Spermatophyta</taxon>
        <taxon>Magnoliopsida</taxon>
        <taxon>Liliopsida</taxon>
        <taxon>Poales</taxon>
        <taxon>Poaceae</taxon>
        <taxon>PACMAD clade</taxon>
        <taxon>Panicoideae</taxon>
        <taxon>Andropogonodae</taxon>
        <taxon>Andropogoneae</taxon>
        <taxon>Tripsacinae</taxon>
        <taxon>Zea</taxon>
    </lineage>
</organism>
<dbReference type="EMBL" id="Y07959">
    <property type="protein sequence ID" value="CAA69256.1"/>
    <property type="molecule type" value="mRNA"/>
</dbReference>
<dbReference type="PIR" id="T03944">
    <property type="entry name" value="T03944"/>
</dbReference>
<dbReference type="RefSeq" id="NP_001105482.1">
    <property type="nucleotide sequence ID" value="NM_001112012.1"/>
</dbReference>
<dbReference type="SMR" id="O24573"/>
<dbReference type="FunCoup" id="O24573">
    <property type="interactions" value="2788"/>
</dbReference>
<dbReference type="STRING" id="4577.O24573"/>
<dbReference type="PaxDb" id="4577-GRMZM2G066460_P01"/>
<dbReference type="eggNOG" id="KOG0815">
    <property type="taxonomic scope" value="Eukaryota"/>
</dbReference>
<dbReference type="InParanoid" id="O24573"/>
<dbReference type="Proteomes" id="UP000007305">
    <property type="component" value="Unplaced"/>
</dbReference>
<dbReference type="ExpressionAtlas" id="O24573">
    <property type="expression patterns" value="baseline and differential"/>
</dbReference>
<dbReference type="GO" id="GO:0022625">
    <property type="term" value="C:cytosolic large ribosomal subunit"/>
    <property type="evidence" value="ECO:0000314"/>
    <property type="project" value="AgBase"/>
</dbReference>
<dbReference type="GO" id="GO:0070180">
    <property type="term" value="F:large ribosomal subunit rRNA binding"/>
    <property type="evidence" value="ECO:0000318"/>
    <property type="project" value="GO_Central"/>
</dbReference>
<dbReference type="GO" id="GO:0044877">
    <property type="term" value="F:protein-containing complex binding"/>
    <property type="evidence" value="ECO:0000314"/>
    <property type="project" value="AgBase"/>
</dbReference>
<dbReference type="GO" id="GO:0003735">
    <property type="term" value="F:structural constituent of ribosome"/>
    <property type="evidence" value="ECO:0000318"/>
    <property type="project" value="GO_Central"/>
</dbReference>
<dbReference type="GO" id="GO:0002181">
    <property type="term" value="P:cytoplasmic translation"/>
    <property type="evidence" value="ECO:0000318"/>
    <property type="project" value="GO_Central"/>
</dbReference>
<dbReference type="GO" id="GO:0034059">
    <property type="term" value="P:response to anoxia"/>
    <property type="evidence" value="ECO:0000314"/>
    <property type="project" value="AgBase"/>
</dbReference>
<dbReference type="GO" id="GO:0042254">
    <property type="term" value="P:ribosome biogenesis"/>
    <property type="evidence" value="ECO:0007669"/>
    <property type="project" value="InterPro"/>
</dbReference>
<dbReference type="CDD" id="cd05795">
    <property type="entry name" value="Ribosomal_P0_L10e"/>
    <property type="match status" value="1"/>
</dbReference>
<dbReference type="FunFam" id="3.90.105.20:FF:000001">
    <property type="entry name" value="60S acidic ribosomal protein P0"/>
    <property type="match status" value="1"/>
</dbReference>
<dbReference type="Gene3D" id="3.30.70.1730">
    <property type="match status" value="1"/>
</dbReference>
<dbReference type="Gene3D" id="3.90.105.20">
    <property type="match status" value="1"/>
</dbReference>
<dbReference type="InterPro" id="IPR050323">
    <property type="entry name" value="Ribosomal_protein_uL10"/>
</dbReference>
<dbReference type="InterPro" id="IPR001790">
    <property type="entry name" value="Ribosomal_uL10"/>
</dbReference>
<dbReference type="InterPro" id="IPR040637">
    <property type="entry name" value="Ribosomal_uL10-like_insert"/>
</dbReference>
<dbReference type="InterPro" id="IPR043164">
    <property type="entry name" value="Ribosomal_uL10-like_insert_sf"/>
</dbReference>
<dbReference type="InterPro" id="IPR043141">
    <property type="entry name" value="Ribosomal_uL10-like_sf"/>
</dbReference>
<dbReference type="InterPro" id="IPR030670">
    <property type="entry name" value="uL10_eukaryotes"/>
</dbReference>
<dbReference type="PANTHER" id="PTHR45699">
    <property type="entry name" value="60S ACIDIC RIBOSOMAL PROTEIN P0"/>
    <property type="match status" value="1"/>
</dbReference>
<dbReference type="PANTHER" id="PTHR45699:SF21">
    <property type="entry name" value="LARGE RIBOSOMAL SUBUNIT PROTEIN UL10"/>
    <property type="match status" value="1"/>
</dbReference>
<dbReference type="Pfam" id="PF00428">
    <property type="entry name" value="Ribosomal_60s"/>
    <property type="match status" value="1"/>
</dbReference>
<dbReference type="Pfam" id="PF00466">
    <property type="entry name" value="Ribosomal_L10"/>
    <property type="match status" value="1"/>
</dbReference>
<dbReference type="Pfam" id="PF17777">
    <property type="entry name" value="RL10P_insert"/>
    <property type="match status" value="1"/>
</dbReference>
<dbReference type="PIRSF" id="PIRSF039087">
    <property type="entry name" value="L10E"/>
    <property type="match status" value="1"/>
</dbReference>
<dbReference type="SUPFAM" id="SSF160369">
    <property type="entry name" value="Ribosomal protein L10-like"/>
    <property type="match status" value="1"/>
</dbReference>
<gene>
    <name type="primary">RP-P0</name>
</gene>
<comment type="function">
    <text>Ribosomal protein P0 is the functional equivalent of E.coli protein L10.</text>
</comment>
<comment type="subunit">
    <text evidence="1">P0 forms a pentameric complex by interaction with dimers of P1 and P2.</text>
</comment>
<comment type="PTM">
    <text evidence="3">Phosphorylated.</text>
</comment>
<comment type="similarity">
    <text evidence="4">Belongs to the universal ribosomal protein uL10 family.</text>
</comment>
<name>RLA0_MAIZE</name>
<keyword id="KW-0903">Direct protein sequencing</keyword>
<keyword id="KW-0597">Phosphoprotein</keyword>
<keyword id="KW-1185">Reference proteome</keyword>
<keyword id="KW-0687">Ribonucleoprotein</keyword>
<keyword id="KW-0689">Ribosomal protein</keyword>
<proteinExistence type="evidence at protein level"/>
<accession>O24573</accession>
<evidence type="ECO:0000250" key="1"/>
<evidence type="ECO:0000256" key="2">
    <source>
        <dbReference type="SAM" id="MobiDB-lite"/>
    </source>
</evidence>
<evidence type="ECO:0000269" key="3">
    <source>
    </source>
</evidence>
<evidence type="ECO:0000305" key="4"/>
<sequence length="319" mass="34505">MAIKRTKAEKKIAYDKKLCSLLDEYTKVLIALADNVGSKQLQDIRRGLRGDSVVLMGKNTLIRRCIKVYAEKTGNHTFDPLMDLLVGNVGLIFTKGDLKEVREEVAKYKVGAPARVGLVAPVDVVVPPGNTGLDPSQTSFFQVLNIPTKINKGTVEIITPVELIKKGEKVGSSESALLAKLGIRPFSYGLQVTSVYEDGSVFSPEVLDLSEEDLIEKFATGVSMVASLSLAISYPTLAAVPHMFINGYKNVLAVAVETDYSYPHADKIKEYLKDPSKFAVAAPVAAGDSGASAAPKEEEKAAEPEEESDEEMGFSLFDD</sequence>
<feature type="initiator methionine" description="Removed" evidence="3">
    <location>
        <position position="1"/>
    </location>
</feature>
<feature type="chain" id="PRO_0000154780" description="Large ribosomal subunit protein uL10">
    <location>
        <begin position="2"/>
        <end position="319"/>
    </location>
</feature>
<feature type="region of interest" description="Disordered" evidence="2">
    <location>
        <begin position="286"/>
        <end position="319"/>
    </location>
</feature>
<feature type="compositionally biased region" description="Acidic residues" evidence="2">
    <location>
        <begin position="304"/>
        <end position="319"/>
    </location>
</feature>
<feature type="sequence conflict" description="In Ref. 2; AA sequence." evidence="4" ref="2">
    <original>K</original>
    <variation>L</variation>
    <location>
        <position position="11"/>
    </location>
</feature>
<protein>
    <recommendedName>
        <fullName evidence="4">Large ribosomal subunit protein uL10</fullName>
    </recommendedName>
    <alternativeName>
        <fullName>60S acidic ribosomal protein P0</fullName>
    </alternativeName>
</protein>